<evidence type="ECO:0000255" key="1">
    <source>
        <dbReference type="HAMAP-Rule" id="MF_00560"/>
    </source>
</evidence>
<comment type="function">
    <text evidence="1">Catalyzes the S-adenosylmethionine monomethyl esterification of trans-aconitate.</text>
</comment>
<comment type="catalytic activity">
    <reaction evidence="1">
        <text>trans-aconitate + S-adenosyl-L-methionine = (E)-3-(methoxycarbonyl)pent-2-enedioate + S-adenosyl-L-homocysteine</text>
        <dbReference type="Rhea" id="RHEA:14969"/>
        <dbReference type="ChEBI" id="CHEBI:15708"/>
        <dbReference type="ChEBI" id="CHEBI:57470"/>
        <dbReference type="ChEBI" id="CHEBI:57856"/>
        <dbReference type="ChEBI" id="CHEBI:59789"/>
        <dbReference type="EC" id="2.1.1.144"/>
    </reaction>
</comment>
<comment type="subcellular location">
    <subcellularLocation>
        <location evidence="1">Cytoplasm</location>
    </subcellularLocation>
</comment>
<comment type="similarity">
    <text evidence="1">Belongs to the methyltransferase superfamily. Tam family.</text>
</comment>
<keyword id="KW-0963">Cytoplasm</keyword>
<keyword id="KW-0489">Methyltransferase</keyword>
<keyword id="KW-0949">S-adenosyl-L-methionine</keyword>
<keyword id="KW-0808">Transferase</keyword>
<accession>A5VRJ7</accession>
<gene>
    <name evidence="1" type="primary">tam</name>
    <name type="ordered locus">BOV_1410</name>
</gene>
<proteinExistence type="inferred from homology"/>
<sequence length="255" mass="28612">MKDWSAKQYLKFEDERSRPARDLLAQIPLSAPRKVVDIGCGPGNSTKLLVERWPDAQISGFDTSPDMIDTAKTHLPDVEFFISDAASFEPDAETDVLFSNAVFQWLPDHVEQLQRLLSLLQPGAFLAVQMPDNMGEQTHVGMRDVAKTAPFAMKIATKGRAALPPVATYYNAFADDAARIDIWHTIYNHPLAGVDAIVEWVKGTGLRPFLDPLDEQEQADYLKAYKARIAEHYPMTADGKVLLRFPRIFLVVQKK</sequence>
<feature type="chain" id="PRO_1000056555" description="Trans-aconitate 2-methyltransferase">
    <location>
        <begin position="1"/>
        <end position="255"/>
    </location>
</feature>
<dbReference type="EC" id="2.1.1.144" evidence="1"/>
<dbReference type="EMBL" id="CP000708">
    <property type="protein sequence ID" value="ABQ61740.1"/>
    <property type="molecule type" value="Genomic_DNA"/>
</dbReference>
<dbReference type="RefSeq" id="WP_004691577.1">
    <property type="nucleotide sequence ID" value="NC_009505.1"/>
</dbReference>
<dbReference type="SMR" id="A5VRJ7"/>
<dbReference type="GeneID" id="55591104"/>
<dbReference type="KEGG" id="bov:BOV_1410"/>
<dbReference type="HOGENOM" id="CLU_037990_5_2_5"/>
<dbReference type="Proteomes" id="UP000006383">
    <property type="component" value="Chromosome I"/>
</dbReference>
<dbReference type="GO" id="GO:0005737">
    <property type="term" value="C:cytoplasm"/>
    <property type="evidence" value="ECO:0007669"/>
    <property type="project" value="UniProtKB-SubCell"/>
</dbReference>
<dbReference type="GO" id="GO:0030798">
    <property type="term" value="F:trans-aconitate 2-methyltransferase activity"/>
    <property type="evidence" value="ECO:0007669"/>
    <property type="project" value="UniProtKB-UniRule"/>
</dbReference>
<dbReference type="GO" id="GO:0032259">
    <property type="term" value="P:methylation"/>
    <property type="evidence" value="ECO:0007669"/>
    <property type="project" value="UniProtKB-KW"/>
</dbReference>
<dbReference type="CDD" id="cd02440">
    <property type="entry name" value="AdoMet_MTases"/>
    <property type="match status" value="1"/>
</dbReference>
<dbReference type="Gene3D" id="1.10.150.290">
    <property type="entry name" value="S-adenosyl-L-methionine-dependent methyltransferases"/>
    <property type="match status" value="1"/>
</dbReference>
<dbReference type="Gene3D" id="3.40.50.150">
    <property type="entry name" value="Vaccinia Virus protein VP39"/>
    <property type="match status" value="1"/>
</dbReference>
<dbReference type="HAMAP" id="MF_00560">
    <property type="entry name" value="Tran_acon_Me_trans"/>
    <property type="match status" value="1"/>
</dbReference>
<dbReference type="InterPro" id="IPR041698">
    <property type="entry name" value="Methyltransf_25"/>
</dbReference>
<dbReference type="InterPro" id="IPR029063">
    <property type="entry name" value="SAM-dependent_MTases_sf"/>
</dbReference>
<dbReference type="InterPro" id="IPR023506">
    <property type="entry name" value="Trans-aconitate_MeTrfase"/>
</dbReference>
<dbReference type="InterPro" id="IPR023149">
    <property type="entry name" value="Trans_acon_MeTrfase_C"/>
</dbReference>
<dbReference type="NCBIfam" id="NF002463">
    <property type="entry name" value="PRK01683.1"/>
    <property type="match status" value="1"/>
</dbReference>
<dbReference type="PANTHER" id="PTHR43861:SF1">
    <property type="entry name" value="TRANS-ACONITATE 2-METHYLTRANSFERASE"/>
    <property type="match status" value="1"/>
</dbReference>
<dbReference type="PANTHER" id="PTHR43861">
    <property type="entry name" value="TRANS-ACONITATE 2-METHYLTRANSFERASE-RELATED"/>
    <property type="match status" value="1"/>
</dbReference>
<dbReference type="Pfam" id="PF13649">
    <property type="entry name" value="Methyltransf_25"/>
    <property type="match status" value="1"/>
</dbReference>
<dbReference type="SUPFAM" id="SSF53335">
    <property type="entry name" value="S-adenosyl-L-methionine-dependent methyltransferases"/>
    <property type="match status" value="1"/>
</dbReference>
<protein>
    <recommendedName>
        <fullName evidence="1">Trans-aconitate 2-methyltransferase</fullName>
        <ecNumber evidence="1">2.1.1.144</ecNumber>
    </recommendedName>
</protein>
<name>TAM_BRUO2</name>
<reference key="1">
    <citation type="journal article" date="2009" name="PLoS ONE">
        <title>Genome degradation in Brucella ovis corresponds with narrowing of its host range and tissue tropism.</title>
        <authorList>
            <person name="Tsolis R.M."/>
            <person name="Seshadri R."/>
            <person name="Santos R.L."/>
            <person name="Sangari F.J."/>
            <person name="Lobo J.M."/>
            <person name="de Jong M.F."/>
            <person name="Ren Q."/>
            <person name="Myers G."/>
            <person name="Brinkac L.M."/>
            <person name="Nelson W.C."/>
            <person name="Deboy R.T."/>
            <person name="Angiuoli S."/>
            <person name="Khouri H."/>
            <person name="Dimitrov G."/>
            <person name="Robinson J.R."/>
            <person name="Mulligan S."/>
            <person name="Walker R.L."/>
            <person name="Elzer P.E."/>
            <person name="Hassan K.A."/>
            <person name="Paulsen I.T."/>
        </authorList>
    </citation>
    <scope>NUCLEOTIDE SEQUENCE [LARGE SCALE GENOMIC DNA]</scope>
    <source>
        <strain>ATCC 25840 / 63/290 / NCTC 10512</strain>
    </source>
</reference>
<organism>
    <name type="scientific">Brucella ovis (strain ATCC 25840 / 63/290 / NCTC 10512)</name>
    <dbReference type="NCBI Taxonomy" id="444178"/>
    <lineage>
        <taxon>Bacteria</taxon>
        <taxon>Pseudomonadati</taxon>
        <taxon>Pseudomonadota</taxon>
        <taxon>Alphaproteobacteria</taxon>
        <taxon>Hyphomicrobiales</taxon>
        <taxon>Brucellaceae</taxon>
        <taxon>Brucella/Ochrobactrum group</taxon>
        <taxon>Brucella</taxon>
    </lineage>
</organism>